<reference key="1">
    <citation type="journal article" date="1992" name="J. Cell Biol.">
        <title>The NUF1 gene encodes an essential coiled-coil related protein that is a potential component of the yeast nucleoskeleton.</title>
        <authorList>
            <person name="Mirzayan C."/>
            <person name="Copeland C.S."/>
            <person name="Snyder M."/>
        </authorList>
    </citation>
    <scope>NUCLEOTIDE SEQUENCE [GENOMIC DNA]</scope>
    <scope>SUBCELLULAR LOCATION</scope>
    <scope>FUNCTION</scope>
    <source>
        <strain>ATCC 204508 / S288c</strain>
    </source>
</reference>
<reference key="2">
    <citation type="journal article" date="1993" name="J. Cell Biol.">
        <title>A spacer protein in the Saccharomyces cerevisiae spindle poly body whose transcript is cell cycle-regulated.</title>
        <authorList>
            <person name="Kilmartin J.V."/>
            <person name="Dyos S.L."/>
            <person name="Kershaw D."/>
            <person name="Finch J.T."/>
        </authorList>
    </citation>
    <scope>NUCLEOTIDE SEQUENCE [GENOMIC DNA]</scope>
    <scope>SUBCELLULAR LOCATION</scope>
    <scope>FUNCTION</scope>
</reference>
<reference key="3">
    <citation type="journal article" date="1997" name="Nature">
        <title>The nucleotide sequence of Saccharomyces cerevisiae chromosome IV.</title>
        <authorList>
            <person name="Jacq C."/>
            <person name="Alt-Moerbe J."/>
            <person name="Andre B."/>
            <person name="Arnold W."/>
            <person name="Bahr A."/>
            <person name="Ballesta J.P.G."/>
            <person name="Bargues M."/>
            <person name="Baron L."/>
            <person name="Becker A."/>
            <person name="Biteau N."/>
            <person name="Bloecker H."/>
            <person name="Blugeon C."/>
            <person name="Boskovic J."/>
            <person name="Brandt P."/>
            <person name="Brueckner M."/>
            <person name="Buitrago M.J."/>
            <person name="Coster F."/>
            <person name="Delaveau T."/>
            <person name="del Rey F."/>
            <person name="Dujon B."/>
            <person name="Eide L.G."/>
            <person name="Garcia-Cantalejo J.M."/>
            <person name="Goffeau A."/>
            <person name="Gomez-Peris A."/>
            <person name="Granotier C."/>
            <person name="Hanemann V."/>
            <person name="Hankeln T."/>
            <person name="Hoheisel J.D."/>
            <person name="Jaeger W."/>
            <person name="Jimenez A."/>
            <person name="Jonniaux J.-L."/>
            <person name="Kraemer C."/>
            <person name="Kuester H."/>
            <person name="Laamanen P."/>
            <person name="Legros Y."/>
            <person name="Louis E.J."/>
            <person name="Moeller-Rieker S."/>
            <person name="Monnet A."/>
            <person name="Moro M."/>
            <person name="Mueller-Auer S."/>
            <person name="Nussbaumer B."/>
            <person name="Paricio N."/>
            <person name="Paulin L."/>
            <person name="Perea J."/>
            <person name="Perez-Alonso M."/>
            <person name="Perez-Ortin J.E."/>
            <person name="Pohl T.M."/>
            <person name="Prydz H."/>
            <person name="Purnelle B."/>
            <person name="Rasmussen S.W."/>
            <person name="Remacha M.A."/>
            <person name="Revuelta J.L."/>
            <person name="Rieger M."/>
            <person name="Salom D."/>
            <person name="Saluz H.P."/>
            <person name="Saiz J.E."/>
            <person name="Saren A.-M."/>
            <person name="Schaefer M."/>
            <person name="Scharfe M."/>
            <person name="Schmidt E.R."/>
            <person name="Schneider C."/>
            <person name="Scholler P."/>
            <person name="Schwarz S."/>
            <person name="Soler-Mira A."/>
            <person name="Urrestarazu L.A."/>
            <person name="Verhasselt P."/>
            <person name="Vissers S."/>
            <person name="Voet M."/>
            <person name="Volckaert G."/>
            <person name="Wagner G."/>
            <person name="Wambutt R."/>
            <person name="Wedler E."/>
            <person name="Wedler H."/>
            <person name="Woelfl S."/>
            <person name="Harris D.E."/>
            <person name="Bowman S."/>
            <person name="Brown D."/>
            <person name="Churcher C.M."/>
            <person name="Connor R."/>
            <person name="Dedman K."/>
            <person name="Gentles S."/>
            <person name="Hamlin N."/>
            <person name="Hunt S."/>
            <person name="Jones L."/>
            <person name="McDonald S."/>
            <person name="Murphy L.D."/>
            <person name="Niblett D."/>
            <person name="Odell C."/>
            <person name="Oliver K."/>
            <person name="Rajandream M.A."/>
            <person name="Richards C."/>
            <person name="Shore L."/>
            <person name="Walsh S.V."/>
            <person name="Barrell B.G."/>
            <person name="Dietrich F.S."/>
            <person name="Mulligan J.T."/>
            <person name="Allen E."/>
            <person name="Araujo R."/>
            <person name="Aviles E."/>
            <person name="Berno A."/>
            <person name="Carpenter J."/>
            <person name="Chen E."/>
            <person name="Cherry J.M."/>
            <person name="Chung E."/>
            <person name="Duncan M."/>
            <person name="Hunicke-Smith S."/>
            <person name="Hyman R.W."/>
            <person name="Komp C."/>
            <person name="Lashkari D."/>
            <person name="Lew H."/>
            <person name="Lin D."/>
            <person name="Mosedale D."/>
            <person name="Nakahara K."/>
            <person name="Namath A."/>
            <person name="Oefner P."/>
            <person name="Oh C."/>
            <person name="Petel F.X."/>
            <person name="Roberts D."/>
            <person name="Schramm S."/>
            <person name="Schroeder M."/>
            <person name="Shogren T."/>
            <person name="Shroff N."/>
            <person name="Winant A."/>
            <person name="Yelton M.A."/>
            <person name="Botstein D."/>
            <person name="Davis R.W."/>
            <person name="Johnston M."/>
            <person name="Andrews S."/>
            <person name="Brinkman R."/>
            <person name="Cooper J."/>
            <person name="Ding H."/>
            <person name="Du Z."/>
            <person name="Favello A."/>
            <person name="Fulton L."/>
            <person name="Gattung S."/>
            <person name="Greco T."/>
            <person name="Hallsworth K."/>
            <person name="Hawkins J."/>
            <person name="Hillier L.W."/>
            <person name="Jier M."/>
            <person name="Johnson D."/>
            <person name="Johnston L."/>
            <person name="Kirsten J."/>
            <person name="Kucaba T."/>
            <person name="Langston Y."/>
            <person name="Latreille P."/>
            <person name="Le T."/>
            <person name="Mardis E."/>
            <person name="Menezes S."/>
            <person name="Miller N."/>
            <person name="Nhan M."/>
            <person name="Pauley A."/>
            <person name="Peluso D."/>
            <person name="Rifkin L."/>
            <person name="Riles L."/>
            <person name="Taich A."/>
            <person name="Trevaskis E."/>
            <person name="Vignati D."/>
            <person name="Wilcox L."/>
            <person name="Wohldman P."/>
            <person name="Vaudin M."/>
            <person name="Wilson R."/>
            <person name="Waterston R."/>
            <person name="Albermann K."/>
            <person name="Hani J."/>
            <person name="Heumann K."/>
            <person name="Kleine K."/>
            <person name="Mewes H.-W."/>
            <person name="Zollner A."/>
            <person name="Zaccaria P."/>
        </authorList>
    </citation>
    <scope>NUCLEOTIDE SEQUENCE [LARGE SCALE GENOMIC DNA]</scope>
    <source>
        <strain>ATCC 204508 / S288c</strain>
    </source>
</reference>
<reference key="4">
    <citation type="journal article" date="2014" name="G3 (Bethesda)">
        <title>The reference genome sequence of Saccharomyces cerevisiae: Then and now.</title>
        <authorList>
            <person name="Engel S.R."/>
            <person name="Dietrich F.S."/>
            <person name="Fisk D.G."/>
            <person name="Binkley G."/>
            <person name="Balakrishnan R."/>
            <person name="Costanzo M.C."/>
            <person name="Dwight S.S."/>
            <person name="Hitz B.C."/>
            <person name="Karra K."/>
            <person name="Nash R.S."/>
            <person name="Weng S."/>
            <person name="Wong E.D."/>
            <person name="Lloyd P."/>
            <person name="Skrzypek M.S."/>
            <person name="Miyasato S.R."/>
            <person name="Simison M."/>
            <person name="Cherry J.M."/>
        </authorList>
    </citation>
    <scope>GENOME REANNOTATION</scope>
    <source>
        <strain>ATCC 204508 / S288c</strain>
    </source>
</reference>
<reference key="5">
    <citation type="journal article" date="1993" name="Mol. Cell. Biol.">
        <title>The essential mitotic target of calmodulin is the 110-kilodalton component of the spindle pole body in Saccharomyces cerevisiae.</title>
        <authorList>
            <person name="Geiser J.R."/>
            <person name="Sundberg H.A."/>
            <person name="Chang B.H."/>
            <person name="Muller E.G."/>
            <person name="Davis T.N."/>
        </authorList>
    </citation>
    <scope>INTERACTION WITH CMD1</scope>
    <scope>DOMAIN</scope>
</reference>
<reference key="6">
    <citation type="journal article" date="1997" name="EMBO J.">
        <title>Spc98p and Spc97p of the yeast gamma-tubulin complex mediate binding to the spindle pole body via their interaction with Spc110p.</title>
        <authorList>
            <person name="Knop M."/>
            <person name="Schiebel E."/>
        </authorList>
    </citation>
    <scope>FUNCTION</scope>
    <scope>SUBCELLULAR LOCATION</scope>
    <scope>INTERACTION WITH SPC97 AND SPC98</scope>
</reference>
<reference key="7">
    <citation type="journal article" date="1999" name="Proc. Natl. Acad. Sci. U.S.A.">
        <title>Spc29p is a component of the Spc110p subcomplex and is essential for spindle pole body duplication.</title>
        <authorList>
            <person name="Elliott S."/>
            <person name="Knop M."/>
            <person name="Schlenstedt G."/>
            <person name="Schiebel E."/>
        </authorList>
    </citation>
    <scope>FUNCTION</scope>
    <scope>SUBCELLULAR LOCATION</scope>
    <scope>IDENTIFICATION IN THE SPC110 COMPLEX</scope>
</reference>
<reference key="8">
    <citation type="journal article" date="2001" name="J. Biol. Chem.">
        <title>Yeast Mps1p phosphorylates the spindle pole component Spc110p in the N-terminal domain.</title>
        <authorList>
            <person name="Friedman D.B."/>
            <person name="Kern J.W."/>
            <person name="Huneycutt B.J."/>
            <person name="Vinh D.B."/>
            <person name="Crawford D.K."/>
            <person name="Steiner E."/>
            <person name="Scheiltz D."/>
            <person name="Yates J. III"/>
            <person name="Resing K.A."/>
            <person name="Ahn N.G."/>
            <person name="Winey M."/>
            <person name="Davis T.N."/>
        </authorList>
    </citation>
    <scope>PHOSPHORYLATION AT SER-60; THR-64 AND THR-68</scope>
    <scope>FUNCTION</scope>
</reference>
<reference key="9">
    <citation type="journal article" date="2003" name="Nature">
        <title>Global analysis of protein expression in yeast.</title>
        <authorList>
            <person name="Ghaemmaghami S."/>
            <person name="Huh W.-K."/>
            <person name="Bower K."/>
            <person name="Howson R.W."/>
            <person name="Belle A."/>
            <person name="Dephoure N."/>
            <person name="O'Shea E.K."/>
            <person name="Weissman J.S."/>
        </authorList>
    </citation>
    <scope>LEVEL OF PROTEIN EXPRESSION [LARGE SCALE ANALYSIS]</scope>
</reference>
<reference key="10">
    <citation type="journal article" date="2005" name="Mol. Biol. Cell">
        <title>The organization of the core proteins of the yeast spindle pole body.</title>
        <authorList>
            <person name="Muller E.G."/>
            <person name="Snydsman B.E."/>
            <person name="Novik I."/>
            <person name="Hailey D.W."/>
            <person name="Gestaut D.R."/>
            <person name="Niemann C.A."/>
            <person name="O'Toole E.T."/>
            <person name="Giddings T.H. Jr."/>
            <person name="Sundin B.A."/>
            <person name="Davis T.N."/>
        </authorList>
    </citation>
    <scope>SUBCELLULAR LOCATION</scope>
    <scope>SUBUNIT</scope>
</reference>
<reference key="11">
    <citation type="journal article" date="2007" name="J. Cell Sci.">
        <title>Phosphorylation of Spc110p by Cdc28p-Clb5p kinase contributes to correct spindle morphogenesis in S. cerevisiae.</title>
        <authorList>
            <person name="Huisman S.M."/>
            <person name="Smeets M.F."/>
            <person name="Segal M."/>
        </authorList>
    </citation>
    <scope>SUBCELLULAR LOCATION</scope>
    <scope>FUNCTION</scope>
    <scope>PHOSPHORYLATION</scope>
    <scope>MUTAGENESIS OF SER-91</scope>
</reference>
<reference key="12">
    <citation type="journal article" date="2007" name="J. Proteome Res.">
        <title>Large-scale phosphorylation analysis of alpha-factor-arrested Saccharomyces cerevisiae.</title>
        <authorList>
            <person name="Li X."/>
            <person name="Gerber S.A."/>
            <person name="Rudner A.D."/>
            <person name="Beausoleil S.A."/>
            <person name="Haas W."/>
            <person name="Villen J."/>
            <person name="Elias J.E."/>
            <person name="Gygi S.P."/>
        </authorList>
    </citation>
    <scope>PHOSPHORYLATION [LARGE SCALE ANALYSIS] AT SER-60</scope>
    <scope>IDENTIFICATION BY MASS SPECTROMETRY [LARGE SCALE ANALYSIS]</scope>
    <source>
        <strain>ADR376</strain>
    </source>
</reference>
<reference key="13">
    <citation type="journal article" date="2008" name="Mol. Cell. Proteomics">
        <title>A multidimensional chromatography technology for in-depth phosphoproteome analysis.</title>
        <authorList>
            <person name="Albuquerque C.P."/>
            <person name="Smolka M.B."/>
            <person name="Payne S.H."/>
            <person name="Bafna V."/>
            <person name="Eng J."/>
            <person name="Zhou H."/>
        </authorList>
    </citation>
    <scope>PHOSPHORYLATION [LARGE SCALE ANALYSIS] AT SER-60 AND SER-529</scope>
    <scope>IDENTIFICATION BY MASS SPECTROMETRY [LARGE SCALE ANALYSIS]</scope>
</reference>
<reference key="14">
    <citation type="journal article" date="2009" name="Science">
        <title>Global analysis of Cdk1 substrate phosphorylation sites provides insights into evolution.</title>
        <authorList>
            <person name="Holt L.J."/>
            <person name="Tuch B.B."/>
            <person name="Villen J."/>
            <person name="Johnson A.D."/>
            <person name="Gygi S.P."/>
            <person name="Morgan D.O."/>
        </authorList>
    </citation>
    <scope>PHOSPHORYLATION [LARGE SCALE ANALYSIS] AT THR-18; SER-60 AND SER-80</scope>
    <scope>IDENTIFICATION BY MASS SPECTROMETRY [LARGE SCALE ANALYSIS]</scope>
</reference>
<proteinExistence type="evidence at protein level"/>
<sequence>MDEASHLPNGSLKNMEFTPVGFIKSKRNTTQTQVVSPTKVPNANNGDENEGPVKKRQRRSIDDTIDSTRLFSEASQFDDSFPEIKANIPPSPRSGNVDKSRKRNLIDDLKKDVPMSQPLKEQEVREHQMKKERFDRALESKLLGKRHITYANSDISNKELYINEIKSLKHEIKELRKEKNDTLNNYDTLEEETDDLKNRLQALEKELDAKNKIVNSRKVDDHSGCIEEREQMERKLAELERKLKTVKDQVLELENNSDVQSLKLRSKEDELKNLMNELNELKSNAEEKDTQLEFKKNELRKRTNELNELKIKSDEMDLQLKQKQNESKRLKDELNELETKFSENGSQSSAKENELKMLKNKIAELEEEISTKNSQLIAKEGKLASLMAQLTQLESKLNQRDSQLGSREEELKKTNDKLQKDIRIAREETVSKDERIIDLQKKVKQLENDLFVIKKTHSESKTITDNELESKDKLIKILENDLKVAQEKYSKMEKELKEREFNYKISESKLEDEKTTLNEKISNLAAENSQLKNKIEDNSTATHHMKENYEKQLESLRKDIEEYKESAKDSEDKIEELKIRIAENSAKVSEKRSKDIKQKDEQISDLTQNLKLQEDEISSLKSIIDRYKKDFNQLKSEQSNIQHDLNLQILNLENKLIESEDELKSLRDSQKIEIENWKRKYNNLSLENDRLLTEKESASDKEREISILNRKLDEMDKEKWNLQESKEKYKRELQKVITANDRLRREKEELNENSNNIRIMEDKMTRIKKNYLSEITSLQEENRRLEERLILNERRKDNDSTMQLNDIISYYKLKYHSEVRHNNDLKVINDYLNKVLALGTRRLRLDTRKGEHSLNISLPDDDELDRDYYNSHVYTRYHDYEYPLRFNLNRRGPYFERRLSFKTVALLVLACVRMKRIAFYRRSDDNRLRILRDRIESSSGRISW</sequence>
<comment type="function">
    <text evidence="3 4 6 8 9 11">Component of the spindle pole body (SPB) required for the proper execution of spindle pole body (SPB) duplication. Potential role in cross-linking filaments or anchoring other molecules. It is essential for growth.</text>
</comment>
<comment type="subunit">
    <text evidence="3 7 10 11">Homodimer. Component of the SPC110 complex containing at least CMD1, SPC29 and SCP110. Interacts with SPC97 and SPC98.</text>
</comment>
<comment type="interaction">
    <interactant intactId="EBI-12369">
        <id>P32380</id>
    </interactant>
    <interactant intactId="EBI-3976">
        <id>P06787</id>
        <label>CMD1</label>
    </interactant>
    <organismsDiffer>false</organismsDiffer>
    <experiments>5</experiments>
</comment>
<comment type="interaction">
    <interactant intactId="EBI-12369">
        <id>P32380</id>
    </interactant>
    <interactant intactId="EBI-25261">
        <id>P40457</id>
        <label>MLP2</label>
    </interactant>
    <organismsDiffer>false</organismsDiffer>
    <experiments>3</experiments>
</comment>
<comment type="subcellular location">
    <subcellularLocation>
        <location>Nucleus</location>
    </subcellularLocation>
    <subcellularLocation>
        <location>Cytoplasm</location>
        <location>Cytoskeleton</location>
        <location>Microtubule organizing center</location>
        <location>Spindle pole body</location>
    </subcellularLocation>
    <text>Tightly associated with the nucleus. It is present in a granular pattern that excludes the nucleolus.</text>
</comment>
<comment type="miscellaneous">
    <text evidence="5">Present with 279 molecules/cell in log phase SD medium.</text>
</comment>
<comment type="similarity">
    <text evidence="12">Belongs to the SPC110 family.</text>
</comment>
<organism>
    <name type="scientific">Saccharomyces cerevisiae (strain ATCC 204508 / S288c)</name>
    <name type="common">Baker's yeast</name>
    <dbReference type="NCBI Taxonomy" id="559292"/>
    <lineage>
        <taxon>Eukaryota</taxon>
        <taxon>Fungi</taxon>
        <taxon>Dikarya</taxon>
        <taxon>Ascomycota</taxon>
        <taxon>Saccharomycotina</taxon>
        <taxon>Saccharomycetes</taxon>
        <taxon>Saccharomycetales</taxon>
        <taxon>Saccharomycetaceae</taxon>
        <taxon>Saccharomyces</taxon>
    </lineage>
</organism>
<accession>P32380</accession>
<accession>D6VSY5</accession>
<feature type="chain" id="PRO_0000057993" description="Spindle pole body component 110">
    <location>
        <begin position="1"/>
        <end position="944"/>
    </location>
</feature>
<feature type="region of interest" description="Disordered" evidence="2">
    <location>
        <begin position="23"/>
        <end position="110"/>
    </location>
</feature>
<feature type="region of interest" description="Calmodulin-binding">
    <location>
        <begin position="900"/>
        <end position="927"/>
    </location>
</feature>
<feature type="coiled-coil region">
    <location>
        <begin position="164"/>
        <end position="791"/>
    </location>
</feature>
<feature type="short sequence motif" description="Nuclear localization signal" evidence="1">
    <location>
        <begin position="54"/>
        <end position="59"/>
    </location>
</feature>
<feature type="short sequence motif" description="Nuclear localization signal" evidence="1">
    <location>
        <begin position="726"/>
        <end position="731"/>
    </location>
</feature>
<feature type="short sequence motif" description="Nuclear localization signal" evidence="1">
    <location>
        <begin position="742"/>
        <end position="747"/>
    </location>
</feature>
<feature type="compositionally biased region" description="Polar residues" evidence="2">
    <location>
        <begin position="28"/>
        <end position="46"/>
    </location>
</feature>
<feature type="compositionally biased region" description="Polar residues" evidence="2">
    <location>
        <begin position="67"/>
        <end position="78"/>
    </location>
</feature>
<feature type="compositionally biased region" description="Basic and acidic residues" evidence="2">
    <location>
        <begin position="96"/>
        <end position="110"/>
    </location>
</feature>
<feature type="modified residue" description="Phosphothreonine" evidence="15">
    <location>
        <position position="18"/>
    </location>
</feature>
<feature type="modified residue" description="Phosphoserine; by MPS1" evidence="4 13 14 15">
    <location>
        <position position="60"/>
    </location>
</feature>
<feature type="modified residue" description="Phosphothreonine; by MPS1" evidence="4">
    <location>
        <position position="64"/>
    </location>
</feature>
<feature type="modified residue" description="Phosphothreonine; by MPS1" evidence="4">
    <location>
        <position position="68"/>
    </location>
</feature>
<feature type="modified residue" description="Phosphoserine" evidence="15">
    <location>
        <position position="80"/>
    </location>
</feature>
<feature type="modified residue" description="Phosphoserine" evidence="14">
    <location>
        <position position="529"/>
    </location>
</feature>
<feature type="mutagenesis site" description="Leads to a mild increase in the proportion of preanaphase spindles at the expense of elongated spindles." evidence="8">
    <original>S</original>
    <variation>A</variation>
    <location>
        <position position="91"/>
    </location>
</feature>
<feature type="helix" evidence="17">
    <location>
        <begin position="120"/>
        <end position="141"/>
    </location>
</feature>
<feature type="helix" evidence="17">
    <location>
        <begin position="158"/>
        <end position="160"/>
    </location>
</feature>
<feature type="helix" evidence="18">
    <location>
        <begin position="164"/>
        <end position="203"/>
    </location>
</feature>
<feature type="helix" evidence="16">
    <location>
        <begin position="901"/>
        <end position="933"/>
    </location>
</feature>
<evidence type="ECO:0000255" key="1"/>
<evidence type="ECO:0000256" key="2">
    <source>
        <dbReference type="SAM" id="MobiDB-lite"/>
    </source>
</evidence>
<evidence type="ECO:0000269" key="3">
    <source>
    </source>
</evidence>
<evidence type="ECO:0000269" key="4">
    <source>
    </source>
</evidence>
<evidence type="ECO:0000269" key="5">
    <source>
    </source>
</evidence>
<evidence type="ECO:0000269" key="6">
    <source>
    </source>
</evidence>
<evidence type="ECO:0000269" key="7">
    <source>
    </source>
</evidence>
<evidence type="ECO:0000269" key="8">
    <source>
    </source>
</evidence>
<evidence type="ECO:0000269" key="9">
    <source>
    </source>
</evidence>
<evidence type="ECO:0000269" key="10">
    <source>
    </source>
</evidence>
<evidence type="ECO:0000269" key="11">
    <source>
    </source>
</evidence>
<evidence type="ECO:0000305" key="12"/>
<evidence type="ECO:0007744" key="13">
    <source>
    </source>
</evidence>
<evidence type="ECO:0007744" key="14">
    <source>
    </source>
</evidence>
<evidence type="ECO:0007744" key="15">
    <source>
    </source>
</evidence>
<evidence type="ECO:0007829" key="16">
    <source>
        <dbReference type="PDB" id="4DS7"/>
    </source>
</evidence>
<evidence type="ECO:0007829" key="17">
    <source>
        <dbReference type="PDB" id="7M2W"/>
    </source>
</evidence>
<evidence type="ECO:0007829" key="18">
    <source>
        <dbReference type="PDB" id="7M3P"/>
    </source>
</evidence>
<dbReference type="EMBL" id="Z11582">
    <property type="protein sequence ID" value="CAA77668.1"/>
    <property type="molecule type" value="Genomic_DNA"/>
</dbReference>
<dbReference type="EMBL" id="X73297">
    <property type="protein sequence ID" value="CAA51733.1"/>
    <property type="molecule type" value="Genomic_DNA"/>
</dbReference>
<dbReference type="EMBL" id="U28372">
    <property type="protein sequence ID" value="AAB64791.1"/>
    <property type="molecule type" value="Genomic_DNA"/>
</dbReference>
<dbReference type="EMBL" id="BK006938">
    <property type="protein sequence ID" value="DAA12195.1"/>
    <property type="molecule type" value="Genomic_DNA"/>
</dbReference>
<dbReference type="PIR" id="S26710">
    <property type="entry name" value="S26710"/>
</dbReference>
<dbReference type="RefSeq" id="NP_010643.3">
    <property type="nucleotide sequence ID" value="NM_001180664.3"/>
</dbReference>
<dbReference type="PDB" id="4DS7">
    <property type="method" value="X-ray"/>
    <property type="resolution" value="2.15 A"/>
    <property type="chains" value="E/F/G/H=891-944"/>
</dbReference>
<dbReference type="PDB" id="7M2W">
    <property type="method" value="EM"/>
    <property type="resolution" value="3.00 A"/>
    <property type="chains" value="K/U/X/Y=1-220"/>
</dbReference>
<dbReference type="PDB" id="7M2X">
    <property type="method" value="EM"/>
    <property type="resolution" value="3.60 A"/>
    <property type="chains" value="U=1-220"/>
</dbReference>
<dbReference type="PDB" id="7M2Y">
    <property type="method" value="EM"/>
    <property type="resolution" value="4.03 A"/>
    <property type="chains" value="U=1-220"/>
</dbReference>
<dbReference type="PDB" id="7M3P">
    <property type="method" value="X-ray"/>
    <property type="resolution" value="2.00 A"/>
    <property type="chains" value="A/B=164-207"/>
</dbReference>
<dbReference type="PDB" id="8QV2">
    <property type="method" value="EM"/>
    <property type="resolution" value="9.20 A"/>
    <property type="chains" value="Sa/Sb/Sc/Sd/Se/Sf/Sg/Sh/Si/Sj/Sk/Sl/Sm/Sn=1-944"/>
</dbReference>
<dbReference type="PDB" id="8QV3">
    <property type="method" value="EM"/>
    <property type="resolution" value="8.20 A"/>
    <property type="chains" value="Sc/Sd=1-944"/>
</dbReference>
<dbReference type="PDBsum" id="4DS7"/>
<dbReference type="PDBsum" id="7M2W"/>
<dbReference type="PDBsum" id="7M2X"/>
<dbReference type="PDBsum" id="7M2Y"/>
<dbReference type="PDBsum" id="7M3P"/>
<dbReference type="PDBsum" id="8QV2"/>
<dbReference type="PDBsum" id="8QV3"/>
<dbReference type="EMDB" id="EMD-23635"/>
<dbReference type="EMDB" id="EMD-23636"/>
<dbReference type="EMDB" id="EMD-23637"/>
<dbReference type="EMDB" id="EMD-2799"/>
<dbReference type="SMR" id="P32380"/>
<dbReference type="BioGRID" id="32412">
    <property type="interactions" value="348"/>
</dbReference>
<dbReference type="ComplexPortal" id="CPX-1419">
    <property type="entry name" value="Spindle pole body central plaque complex"/>
</dbReference>
<dbReference type="DIP" id="DIP-702N"/>
<dbReference type="FunCoup" id="P32380">
    <property type="interactions" value="389"/>
</dbReference>
<dbReference type="IntAct" id="P32380">
    <property type="interactions" value="68"/>
</dbReference>
<dbReference type="MINT" id="P32380"/>
<dbReference type="STRING" id="4932.YDR356W"/>
<dbReference type="iPTMnet" id="P32380"/>
<dbReference type="PaxDb" id="4932-YDR356W"/>
<dbReference type="PeptideAtlas" id="P32380"/>
<dbReference type="EnsemblFungi" id="YDR356W_mRNA">
    <property type="protein sequence ID" value="YDR356W"/>
    <property type="gene ID" value="YDR356W"/>
</dbReference>
<dbReference type="GeneID" id="851957"/>
<dbReference type="KEGG" id="sce:YDR356W"/>
<dbReference type="AGR" id="SGD:S000002764"/>
<dbReference type="SGD" id="S000002764">
    <property type="gene designation" value="SPC110"/>
</dbReference>
<dbReference type="VEuPathDB" id="FungiDB:YDR356W"/>
<dbReference type="eggNOG" id="ENOG502QUTQ">
    <property type="taxonomic scope" value="Eukaryota"/>
</dbReference>
<dbReference type="HOGENOM" id="CLU_329279_0_0_1"/>
<dbReference type="InParanoid" id="P32380"/>
<dbReference type="OMA" id="MENASNK"/>
<dbReference type="OrthoDB" id="10255522at2759"/>
<dbReference type="BioCyc" id="YEAST:G3O-29907-MONOMER"/>
<dbReference type="BioGRID-ORCS" id="851957">
    <property type="hits" value="7 hits in 10 CRISPR screens"/>
</dbReference>
<dbReference type="CD-CODE" id="876000F7">
    <property type="entry name" value="Centrosome"/>
</dbReference>
<dbReference type="PRO" id="PR:P32380"/>
<dbReference type="Proteomes" id="UP000002311">
    <property type="component" value="Chromosome IV"/>
</dbReference>
<dbReference type="RNAct" id="P32380">
    <property type="molecule type" value="protein"/>
</dbReference>
<dbReference type="GO" id="GO:0005823">
    <property type="term" value="C:central plaque of spindle pole body"/>
    <property type="evidence" value="ECO:0000314"/>
    <property type="project" value="SGD"/>
</dbReference>
<dbReference type="GO" id="GO:0005737">
    <property type="term" value="C:cytoplasm"/>
    <property type="evidence" value="ECO:0007669"/>
    <property type="project" value="UniProtKB-KW"/>
</dbReference>
<dbReference type="GO" id="GO:0005856">
    <property type="term" value="C:cytoskeleton"/>
    <property type="evidence" value="ECO:0000318"/>
    <property type="project" value="GO_Central"/>
</dbReference>
<dbReference type="GO" id="GO:0005822">
    <property type="term" value="C:inner plaque of spindle pole body"/>
    <property type="evidence" value="ECO:0000314"/>
    <property type="project" value="SGD"/>
</dbReference>
<dbReference type="GO" id="GO:0005634">
    <property type="term" value="C:nucleus"/>
    <property type="evidence" value="ECO:0000314"/>
    <property type="project" value="SGD"/>
</dbReference>
<dbReference type="GO" id="GO:0005516">
    <property type="term" value="F:calmodulin binding"/>
    <property type="evidence" value="ECO:0000314"/>
    <property type="project" value="SGD"/>
</dbReference>
<dbReference type="GO" id="GO:0044877">
    <property type="term" value="F:protein-containing complex binding"/>
    <property type="evidence" value="ECO:0000314"/>
    <property type="project" value="SGD"/>
</dbReference>
<dbReference type="GO" id="GO:0005200">
    <property type="term" value="F:structural constituent of cytoskeleton"/>
    <property type="evidence" value="ECO:0000315"/>
    <property type="project" value="SGD"/>
</dbReference>
<dbReference type="GO" id="GO:0110120">
    <property type="term" value="P:gamma-tubulin complex localization to nuclear side of mitotic spindle pole body"/>
    <property type="evidence" value="ECO:0000314"/>
    <property type="project" value="SGD"/>
</dbReference>
<dbReference type="GO" id="GO:0000742">
    <property type="term" value="P:karyogamy involved in conjugation with cellular fusion"/>
    <property type="evidence" value="ECO:0000315"/>
    <property type="project" value="SGD"/>
</dbReference>
<dbReference type="GO" id="GO:0000022">
    <property type="term" value="P:mitotic spindle elongation"/>
    <property type="evidence" value="ECO:0000315"/>
    <property type="project" value="SGD"/>
</dbReference>
<dbReference type="GO" id="GO:0090063">
    <property type="term" value="P:positive regulation of microtubule nucleation"/>
    <property type="evidence" value="ECO:0000315"/>
    <property type="project" value="SGD"/>
</dbReference>
<dbReference type="GO" id="GO:1902440">
    <property type="term" value="P:protein localization to mitotic spindle pole body"/>
    <property type="evidence" value="ECO:0000315"/>
    <property type="project" value="SGD"/>
</dbReference>
<dbReference type="GO" id="GO:0065003">
    <property type="term" value="P:protein-containing complex assembly"/>
    <property type="evidence" value="ECO:0000314"/>
    <property type="project" value="SGD"/>
</dbReference>
<dbReference type="GO" id="GO:0010968">
    <property type="term" value="P:regulation of microtubule nucleation"/>
    <property type="evidence" value="ECO:0000303"/>
    <property type="project" value="ComplexPortal"/>
</dbReference>
<dbReference type="Gene3D" id="1.10.287.1490">
    <property type="match status" value="1"/>
</dbReference>
<dbReference type="Gene3D" id="6.10.310.10">
    <property type="match status" value="1"/>
</dbReference>
<dbReference type="InterPro" id="IPR040593">
    <property type="entry name" value="Spc110_C"/>
</dbReference>
<dbReference type="PANTHER" id="PTHR18898:SF2">
    <property type="entry name" value="NUCLEOPROTEIN TPR"/>
    <property type="match status" value="1"/>
</dbReference>
<dbReference type="PANTHER" id="PTHR18898">
    <property type="entry name" value="NUCLEOPROTEIN TPR-RELATED"/>
    <property type="match status" value="1"/>
</dbReference>
<dbReference type="Pfam" id="PF18520">
    <property type="entry name" value="Spc110_C"/>
    <property type="match status" value="1"/>
</dbReference>
<keyword id="KW-0002">3D-structure</keyword>
<keyword id="KW-0175">Coiled coil</keyword>
<keyword id="KW-0963">Cytoplasm</keyword>
<keyword id="KW-0206">Cytoskeleton</keyword>
<keyword id="KW-0539">Nucleus</keyword>
<keyword id="KW-0597">Phosphoprotein</keyword>
<keyword id="KW-1185">Reference proteome</keyword>
<gene>
    <name type="primary">SPC110</name>
    <name type="synonym">NUF1</name>
    <name type="synonym">XCM1</name>
    <name type="ordered locus">YDR356W</name>
    <name type="ORF">D9476.3</name>
</gene>
<name>SP110_YEAST</name>
<protein>
    <recommendedName>
        <fullName>Spindle pole body component 110</fullName>
    </recommendedName>
    <alternativeName>
        <fullName>Extragenic suppressor of CMD1-1 mutant protein 1</fullName>
    </alternativeName>
    <alternativeName>
        <fullName>Nuclear filament-related protein 1</fullName>
    </alternativeName>
    <alternativeName>
        <fullName>Spindle pole body spacer protein SPC110</fullName>
    </alternativeName>
</protein>